<reference key="1">
    <citation type="journal article" date="2008" name="Genome Res.">
        <title>Insights from the complete genome sequence of Mycobacterium marinum on the evolution of Mycobacterium tuberculosis.</title>
        <authorList>
            <person name="Stinear T.P."/>
            <person name="Seemann T."/>
            <person name="Harrison P.F."/>
            <person name="Jenkin G.A."/>
            <person name="Davies J.K."/>
            <person name="Johnson P.D."/>
            <person name="Abdellah Z."/>
            <person name="Arrowsmith C."/>
            <person name="Chillingworth T."/>
            <person name="Churcher C."/>
            <person name="Clarke K."/>
            <person name="Cronin A."/>
            <person name="Davis P."/>
            <person name="Goodhead I."/>
            <person name="Holroyd N."/>
            <person name="Jagels K."/>
            <person name="Lord A."/>
            <person name="Moule S."/>
            <person name="Mungall K."/>
            <person name="Norbertczak H."/>
            <person name="Quail M.A."/>
            <person name="Rabbinowitsch E."/>
            <person name="Walker D."/>
            <person name="White B."/>
            <person name="Whitehead S."/>
            <person name="Small P.L."/>
            <person name="Brosch R."/>
            <person name="Ramakrishnan L."/>
            <person name="Fischbach M.A."/>
            <person name="Parkhill J."/>
            <person name="Cole S.T."/>
        </authorList>
    </citation>
    <scope>NUCLEOTIDE SEQUENCE [LARGE SCALE GENOMIC DNA]</scope>
    <source>
        <strain>ATCC BAA-535 / M</strain>
    </source>
</reference>
<organism>
    <name type="scientific">Mycobacterium marinum (strain ATCC BAA-535 / M)</name>
    <dbReference type="NCBI Taxonomy" id="216594"/>
    <lineage>
        <taxon>Bacteria</taxon>
        <taxon>Bacillati</taxon>
        <taxon>Actinomycetota</taxon>
        <taxon>Actinomycetes</taxon>
        <taxon>Mycobacteriales</taxon>
        <taxon>Mycobacteriaceae</taxon>
        <taxon>Mycobacterium</taxon>
        <taxon>Mycobacterium ulcerans group</taxon>
    </lineage>
</organism>
<accession>B2HGD8</accession>
<proteinExistence type="inferred from homology"/>
<keyword id="KW-1003">Cell membrane</keyword>
<keyword id="KW-0472">Membrane</keyword>
<keyword id="KW-0520">NAD</keyword>
<keyword id="KW-0874">Quinone</keyword>
<keyword id="KW-1185">Reference proteome</keyword>
<keyword id="KW-1278">Translocase</keyword>
<keyword id="KW-0812">Transmembrane</keyword>
<keyword id="KW-1133">Transmembrane helix</keyword>
<keyword id="KW-0813">Transport</keyword>
<gene>
    <name evidence="1" type="primary">nuoK</name>
    <name type="ordered locus">MMAR_1473</name>
</gene>
<comment type="function">
    <text evidence="1">NDH-1 shuttles electrons from NADH, via FMN and iron-sulfur (Fe-S) centers, to quinones in the respiratory chain. The immediate electron acceptor for the enzyme in this species is believed to be a menaquinone. Couples the redox reaction to proton translocation (for every two electrons transferred, four hydrogen ions are translocated across the cytoplasmic membrane), and thus conserves the redox energy in a proton gradient.</text>
</comment>
<comment type="catalytic activity">
    <reaction evidence="1">
        <text>a quinone + NADH + 5 H(+)(in) = a quinol + NAD(+) + 4 H(+)(out)</text>
        <dbReference type="Rhea" id="RHEA:57888"/>
        <dbReference type="ChEBI" id="CHEBI:15378"/>
        <dbReference type="ChEBI" id="CHEBI:24646"/>
        <dbReference type="ChEBI" id="CHEBI:57540"/>
        <dbReference type="ChEBI" id="CHEBI:57945"/>
        <dbReference type="ChEBI" id="CHEBI:132124"/>
    </reaction>
</comment>
<comment type="subunit">
    <text evidence="1">NDH-1 is composed of 14 different subunits. Subunits NuoA, H, J, K, L, M, N constitute the membrane sector of the complex.</text>
</comment>
<comment type="subcellular location">
    <subcellularLocation>
        <location evidence="1">Cell membrane</location>
        <topology evidence="1">Multi-pass membrane protein</topology>
    </subcellularLocation>
</comment>
<comment type="similarity">
    <text evidence="1">Belongs to the complex I subunit 4L family.</text>
</comment>
<feature type="chain" id="PRO_0000390129" description="NADH-quinone oxidoreductase subunit K">
    <location>
        <begin position="1"/>
        <end position="99"/>
    </location>
</feature>
<feature type="transmembrane region" description="Helical" evidence="1">
    <location>
        <begin position="3"/>
        <end position="23"/>
    </location>
</feature>
<feature type="transmembrane region" description="Helical" evidence="1">
    <location>
        <begin position="28"/>
        <end position="48"/>
    </location>
</feature>
<feature type="transmembrane region" description="Helical" evidence="1">
    <location>
        <begin position="59"/>
        <end position="79"/>
    </location>
</feature>
<evidence type="ECO:0000255" key="1">
    <source>
        <dbReference type="HAMAP-Rule" id="MF_01456"/>
    </source>
</evidence>
<name>NUOK_MYCMM</name>
<dbReference type="EC" id="7.1.1.-" evidence="1"/>
<dbReference type="EMBL" id="CP000854">
    <property type="protein sequence ID" value="ACC39924.1"/>
    <property type="molecule type" value="Genomic_DNA"/>
</dbReference>
<dbReference type="RefSeq" id="WP_011740432.1">
    <property type="nucleotide sequence ID" value="NC_010612.1"/>
</dbReference>
<dbReference type="SMR" id="B2HGD8"/>
<dbReference type="STRING" id="216594.MMAR_1473"/>
<dbReference type="KEGG" id="mmi:MMAR_1473"/>
<dbReference type="eggNOG" id="COG0713">
    <property type="taxonomic scope" value="Bacteria"/>
</dbReference>
<dbReference type="HOGENOM" id="CLU_144724_0_0_11"/>
<dbReference type="OrthoDB" id="9810120at2"/>
<dbReference type="Proteomes" id="UP000001190">
    <property type="component" value="Chromosome"/>
</dbReference>
<dbReference type="GO" id="GO:0030964">
    <property type="term" value="C:NADH dehydrogenase complex"/>
    <property type="evidence" value="ECO:0007669"/>
    <property type="project" value="TreeGrafter"/>
</dbReference>
<dbReference type="GO" id="GO:0005886">
    <property type="term" value="C:plasma membrane"/>
    <property type="evidence" value="ECO:0007669"/>
    <property type="project" value="UniProtKB-SubCell"/>
</dbReference>
<dbReference type="GO" id="GO:0050136">
    <property type="term" value="F:NADH:ubiquinone reductase (non-electrogenic) activity"/>
    <property type="evidence" value="ECO:0007669"/>
    <property type="project" value="UniProtKB-UniRule"/>
</dbReference>
<dbReference type="GO" id="GO:0048038">
    <property type="term" value="F:quinone binding"/>
    <property type="evidence" value="ECO:0007669"/>
    <property type="project" value="UniProtKB-KW"/>
</dbReference>
<dbReference type="GO" id="GO:0042773">
    <property type="term" value="P:ATP synthesis coupled electron transport"/>
    <property type="evidence" value="ECO:0007669"/>
    <property type="project" value="InterPro"/>
</dbReference>
<dbReference type="FunFam" id="1.10.287.3510:FF:000001">
    <property type="entry name" value="NADH-quinone oxidoreductase subunit K"/>
    <property type="match status" value="1"/>
</dbReference>
<dbReference type="Gene3D" id="1.10.287.3510">
    <property type="match status" value="1"/>
</dbReference>
<dbReference type="HAMAP" id="MF_01456">
    <property type="entry name" value="NDH1_NuoK"/>
    <property type="match status" value="1"/>
</dbReference>
<dbReference type="InterPro" id="IPR001133">
    <property type="entry name" value="NADH_UbQ_OxRdtase_chain4L/K"/>
</dbReference>
<dbReference type="InterPro" id="IPR039428">
    <property type="entry name" value="NUOK/Mnh_C1-like"/>
</dbReference>
<dbReference type="NCBIfam" id="NF004320">
    <property type="entry name" value="PRK05715.1-2"/>
    <property type="match status" value="1"/>
</dbReference>
<dbReference type="NCBIfam" id="NF004321">
    <property type="entry name" value="PRK05715.1-3"/>
    <property type="match status" value="1"/>
</dbReference>
<dbReference type="PANTHER" id="PTHR11434:SF21">
    <property type="entry name" value="NADH DEHYDROGENASE SUBUNIT 4L-RELATED"/>
    <property type="match status" value="1"/>
</dbReference>
<dbReference type="PANTHER" id="PTHR11434">
    <property type="entry name" value="NADH-UBIQUINONE OXIDOREDUCTASE SUBUNIT ND4L"/>
    <property type="match status" value="1"/>
</dbReference>
<dbReference type="Pfam" id="PF00420">
    <property type="entry name" value="Oxidored_q2"/>
    <property type="match status" value="1"/>
</dbReference>
<protein>
    <recommendedName>
        <fullName evidence="1">NADH-quinone oxidoreductase subunit K</fullName>
        <ecNumber evidence="1">7.1.1.-</ecNumber>
    </recommendedName>
    <alternativeName>
        <fullName evidence="1">NADH dehydrogenase I subunit K</fullName>
    </alternativeName>
    <alternativeName>
        <fullName evidence="1">NDH-1 subunit K</fullName>
    </alternativeName>
</protein>
<sequence>MNPANYLYLSALLFTIGASGVLLRRNAIVMFMCVELMLNAVNLAFVTFARMHGHLDGQMIAFFTMVVAACEVVVGLAIIMTIFRTRKSASVDDANLLKG</sequence>